<protein>
    <recommendedName>
        <fullName>Copper-exporting P-type ATPase</fullName>
        <ecNumber>7.2.2.8</ecNumber>
    </recommendedName>
    <alternativeName>
        <fullName>Copper-exporting P-type ATPase A</fullName>
    </alternativeName>
    <alternativeName>
        <fullName>Cu(+)-exporting ATPase</fullName>
    </alternativeName>
</protein>
<accession>A5IVY3</accession>
<sequence>MANTKKTTLDITGMTCAACSNRIEKKLNKLDDVNAQVNLTTEKATVEYNPDQHDVQEFINTIQHLGYGVTVETVELDITGMTCAACSSRIEKVLNKMNGVQNATVNLTTEQAKVDYYPEETDADKLVTRIQKLGYDASIKDNNKDQTSRKAEALQHKLIKLIISAVLSLPLLMLMFVHLFNMHIPALFTNPWFQFILATPVQFIIGWQFYVGAYKNLRNGGANMDVLVAVGTSAAYFYSIYEMVRWLNGSTTQPHLYFETSAVLLTLILFGKYLEARAKSQTTNALGELLSLQAKEARILKDGNEVMIPLNEVHVGDTLIVKPGEKIPVDGKIIKGMTAIDESMLTGESIPVEKNVDDTVIGSTMNKNGTITMTATKVGGDTALANIIKVVEEAQSSKAPIQRLADIISGYFVPIVVGIALLIFIVWITLVTPGTFEPALVASISVLVIACPCALGLATPTSIMVGTGRAAENGILFKGGEFVERTHQIDTIVLDKTGTITNGRPVVTDYHGDNQTLQLLATAEKDSEHPLAEAIVNYAKEKQLTLTETTTFKAVPGHGIEATIDHHHILVGNRKLMADNDISLPKHISDDLTHYERDGKTAMLIAVNYSLTGIIAVADTVKDHAKDAIKQLHDMGIEVAMLTGDNKNTAQAIAKQVGIDTVIADILPEEKAAQIAKLQQQGKKVAMVGDGVNDAPALVKADIGIAIGTGTEVAIEAADITILGGDLMLIPKAIYASKATIRNIRQNLFWAFGYNIAGIPIAALGLLAPWVAGAAMALSSVSVVTNALRLKKMRLEPRRKDA</sequence>
<gene>
    <name type="primary">copA</name>
    <name type="ordered locus">SaurJH9_2579</name>
</gene>
<proteinExistence type="inferred from homology"/>
<evidence type="ECO:0000250" key="1"/>
<evidence type="ECO:0000255" key="2"/>
<evidence type="ECO:0000255" key="3">
    <source>
        <dbReference type="PROSITE-ProRule" id="PRU00280"/>
    </source>
</evidence>
<evidence type="ECO:0000305" key="4"/>
<organism>
    <name type="scientific">Staphylococcus aureus (strain JH9)</name>
    <dbReference type="NCBI Taxonomy" id="359786"/>
    <lineage>
        <taxon>Bacteria</taxon>
        <taxon>Bacillati</taxon>
        <taxon>Bacillota</taxon>
        <taxon>Bacilli</taxon>
        <taxon>Bacillales</taxon>
        <taxon>Staphylococcaceae</taxon>
        <taxon>Staphylococcus</taxon>
    </lineage>
</organism>
<reference key="1">
    <citation type="submission" date="2007-05" db="EMBL/GenBank/DDBJ databases">
        <title>Complete sequence of chromosome of Staphylococcus aureus subsp. aureus JH9.</title>
        <authorList>
            <consortium name="US DOE Joint Genome Institute"/>
            <person name="Copeland A."/>
            <person name="Lucas S."/>
            <person name="Lapidus A."/>
            <person name="Barry K."/>
            <person name="Detter J.C."/>
            <person name="Glavina del Rio T."/>
            <person name="Hammon N."/>
            <person name="Israni S."/>
            <person name="Pitluck S."/>
            <person name="Chain P."/>
            <person name="Malfatti S."/>
            <person name="Shin M."/>
            <person name="Vergez L."/>
            <person name="Schmutz J."/>
            <person name="Larimer F."/>
            <person name="Land M."/>
            <person name="Hauser L."/>
            <person name="Kyrpides N."/>
            <person name="Kim E."/>
            <person name="Tomasz A."/>
            <person name="Richardson P."/>
        </authorList>
    </citation>
    <scope>NUCLEOTIDE SEQUENCE [LARGE SCALE GENOMIC DNA]</scope>
    <source>
        <strain>JH9</strain>
    </source>
</reference>
<name>COPA_STAA9</name>
<keyword id="KW-0067">ATP-binding</keyword>
<keyword id="KW-1003">Cell membrane</keyword>
<keyword id="KW-0186">Copper</keyword>
<keyword id="KW-0187">Copper transport</keyword>
<keyword id="KW-0406">Ion transport</keyword>
<keyword id="KW-0460">Magnesium</keyword>
<keyword id="KW-0472">Membrane</keyword>
<keyword id="KW-0479">Metal-binding</keyword>
<keyword id="KW-0547">Nucleotide-binding</keyword>
<keyword id="KW-0597">Phosphoprotein</keyword>
<keyword id="KW-0677">Repeat</keyword>
<keyword id="KW-1278">Translocase</keyword>
<keyword id="KW-0812">Transmembrane</keyword>
<keyword id="KW-1133">Transmembrane helix</keyword>
<keyword id="KW-0813">Transport</keyword>
<dbReference type="EC" id="7.2.2.8"/>
<dbReference type="EMBL" id="CP000703">
    <property type="protein sequence ID" value="ABQ50356.1"/>
    <property type="molecule type" value="Genomic_DNA"/>
</dbReference>
<dbReference type="RefSeq" id="WP_000024139.1">
    <property type="nucleotide sequence ID" value="NC_009487.1"/>
</dbReference>
<dbReference type="SMR" id="A5IVY3"/>
<dbReference type="KEGG" id="saj:SaurJH9_2579"/>
<dbReference type="HOGENOM" id="CLU_001771_0_3_9"/>
<dbReference type="GO" id="GO:0005886">
    <property type="term" value="C:plasma membrane"/>
    <property type="evidence" value="ECO:0007669"/>
    <property type="project" value="UniProtKB-SubCell"/>
</dbReference>
<dbReference type="GO" id="GO:0005524">
    <property type="term" value="F:ATP binding"/>
    <property type="evidence" value="ECO:0007669"/>
    <property type="project" value="UniProtKB-KW"/>
</dbReference>
<dbReference type="GO" id="GO:0016887">
    <property type="term" value="F:ATP hydrolysis activity"/>
    <property type="evidence" value="ECO:0007669"/>
    <property type="project" value="InterPro"/>
</dbReference>
<dbReference type="GO" id="GO:0005507">
    <property type="term" value="F:copper ion binding"/>
    <property type="evidence" value="ECO:0007669"/>
    <property type="project" value="InterPro"/>
</dbReference>
<dbReference type="GO" id="GO:0043682">
    <property type="term" value="F:P-type divalent copper transporter activity"/>
    <property type="evidence" value="ECO:0007669"/>
    <property type="project" value="TreeGrafter"/>
</dbReference>
<dbReference type="GO" id="GO:0140581">
    <property type="term" value="F:P-type monovalent copper transporter activity"/>
    <property type="evidence" value="ECO:0007669"/>
    <property type="project" value="UniProtKB-EC"/>
</dbReference>
<dbReference type="GO" id="GO:0055070">
    <property type="term" value="P:copper ion homeostasis"/>
    <property type="evidence" value="ECO:0007669"/>
    <property type="project" value="TreeGrafter"/>
</dbReference>
<dbReference type="CDD" id="cd00371">
    <property type="entry name" value="HMA"/>
    <property type="match status" value="2"/>
</dbReference>
<dbReference type="CDD" id="cd02094">
    <property type="entry name" value="P-type_ATPase_Cu-like"/>
    <property type="match status" value="1"/>
</dbReference>
<dbReference type="FunFam" id="3.40.1110.10:FF:000038">
    <property type="entry name" value="Copper-exporting P-type ATPase"/>
    <property type="match status" value="1"/>
</dbReference>
<dbReference type="FunFam" id="3.40.1110.10:FF:000049">
    <property type="entry name" value="Copper-exporting P-type ATPase"/>
    <property type="match status" value="1"/>
</dbReference>
<dbReference type="FunFam" id="2.70.150.10:FF:000020">
    <property type="entry name" value="Copper-exporting P-type ATPase A"/>
    <property type="match status" value="1"/>
</dbReference>
<dbReference type="FunFam" id="3.30.70.100:FF:000005">
    <property type="entry name" value="Copper-exporting P-type ATPase A"/>
    <property type="match status" value="2"/>
</dbReference>
<dbReference type="FunFam" id="3.40.50.1000:FF:000144">
    <property type="entry name" value="copper-transporting ATPase 1 isoform X2"/>
    <property type="match status" value="1"/>
</dbReference>
<dbReference type="Gene3D" id="3.30.70.100">
    <property type="match status" value="2"/>
</dbReference>
<dbReference type="Gene3D" id="3.40.1110.10">
    <property type="entry name" value="Calcium-transporting ATPase, cytoplasmic domain N"/>
    <property type="match status" value="2"/>
</dbReference>
<dbReference type="Gene3D" id="2.70.150.10">
    <property type="entry name" value="Calcium-transporting ATPase, cytoplasmic transduction domain A"/>
    <property type="match status" value="1"/>
</dbReference>
<dbReference type="Gene3D" id="3.40.50.1000">
    <property type="entry name" value="HAD superfamily/HAD-like"/>
    <property type="match status" value="1"/>
</dbReference>
<dbReference type="InterPro" id="IPR023299">
    <property type="entry name" value="ATPase_P-typ_cyto_dom_N"/>
</dbReference>
<dbReference type="InterPro" id="IPR018303">
    <property type="entry name" value="ATPase_P-typ_P_site"/>
</dbReference>
<dbReference type="InterPro" id="IPR023298">
    <property type="entry name" value="ATPase_P-typ_TM_dom_sf"/>
</dbReference>
<dbReference type="InterPro" id="IPR008250">
    <property type="entry name" value="ATPase_P-typ_transduc_dom_A_sf"/>
</dbReference>
<dbReference type="InterPro" id="IPR036412">
    <property type="entry name" value="HAD-like_sf"/>
</dbReference>
<dbReference type="InterPro" id="IPR023214">
    <property type="entry name" value="HAD_sf"/>
</dbReference>
<dbReference type="InterPro" id="IPR017969">
    <property type="entry name" value="Heavy-metal-associated_CS"/>
</dbReference>
<dbReference type="InterPro" id="IPR006122">
    <property type="entry name" value="HMA_Cu_ion-bd"/>
</dbReference>
<dbReference type="InterPro" id="IPR006121">
    <property type="entry name" value="HMA_dom"/>
</dbReference>
<dbReference type="InterPro" id="IPR036163">
    <property type="entry name" value="HMA_dom_sf"/>
</dbReference>
<dbReference type="InterPro" id="IPR027256">
    <property type="entry name" value="P-typ_ATPase_IB"/>
</dbReference>
<dbReference type="InterPro" id="IPR001757">
    <property type="entry name" value="P_typ_ATPase"/>
</dbReference>
<dbReference type="InterPro" id="IPR044492">
    <property type="entry name" value="P_typ_ATPase_HD_dom"/>
</dbReference>
<dbReference type="NCBIfam" id="TIGR01511">
    <property type="entry name" value="ATPase-IB1_Cu"/>
    <property type="match status" value="1"/>
</dbReference>
<dbReference type="NCBIfam" id="TIGR01525">
    <property type="entry name" value="ATPase-IB_hvy"/>
    <property type="match status" value="1"/>
</dbReference>
<dbReference type="NCBIfam" id="TIGR01494">
    <property type="entry name" value="ATPase_P-type"/>
    <property type="match status" value="1"/>
</dbReference>
<dbReference type="NCBIfam" id="TIGR00003">
    <property type="entry name" value="copper ion binding protein"/>
    <property type="match status" value="2"/>
</dbReference>
<dbReference type="PANTHER" id="PTHR43520">
    <property type="entry name" value="ATP7, ISOFORM B"/>
    <property type="match status" value="1"/>
</dbReference>
<dbReference type="PANTHER" id="PTHR43520:SF8">
    <property type="entry name" value="P-TYPE CU(+) TRANSPORTER"/>
    <property type="match status" value="1"/>
</dbReference>
<dbReference type="Pfam" id="PF00122">
    <property type="entry name" value="E1-E2_ATPase"/>
    <property type="match status" value="1"/>
</dbReference>
<dbReference type="Pfam" id="PF00403">
    <property type="entry name" value="HMA"/>
    <property type="match status" value="2"/>
</dbReference>
<dbReference type="Pfam" id="PF00702">
    <property type="entry name" value="Hydrolase"/>
    <property type="match status" value="1"/>
</dbReference>
<dbReference type="PRINTS" id="PR00119">
    <property type="entry name" value="CATATPASE"/>
</dbReference>
<dbReference type="PRINTS" id="PR00943">
    <property type="entry name" value="CUATPASE"/>
</dbReference>
<dbReference type="SFLD" id="SFLDS00003">
    <property type="entry name" value="Haloacid_Dehalogenase"/>
    <property type="match status" value="1"/>
</dbReference>
<dbReference type="SFLD" id="SFLDF00027">
    <property type="entry name" value="p-type_atpase"/>
    <property type="match status" value="1"/>
</dbReference>
<dbReference type="SUPFAM" id="SSF81653">
    <property type="entry name" value="Calcium ATPase, transduction domain A"/>
    <property type="match status" value="1"/>
</dbReference>
<dbReference type="SUPFAM" id="SSF81665">
    <property type="entry name" value="Calcium ATPase, transmembrane domain M"/>
    <property type="match status" value="1"/>
</dbReference>
<dbReference type="SUPFAM" id="SSF56784">
    <property type="entry name" value="HAD-like"/>
    <property type="match status" value="1"/>
</dbReference>
<dbReference type="SUPFAM" id="SSF55008">
    <property type="entry name" value="HMA, heavy metal-associated domain"/>
    <property type="match status" value="2"/>
</dbReference>
<dbReference type="PROSITE" id="PS00154">
    <property type="entry name" value="ATPASE_E1_E2"/>
    <property type="match status" value="1"/>
</dbReference>
<dbReference type="PROSITE" id="PS01047">
    <property type="entry name" value="HMA_1"/>
    <property type="match status" value="2"/>
</dbReference>
<dbReference type="PROSITE" id="PS50846">
    <property type="entry name" value="HMA_2"/>
    <property type="match status" value="2"/>
</dbReference>
<comment type="function">
    <text evidence="1">Involved in copper export.</text>
</comment>
<comment type="catalytic activity">
    <reaction>
        <text>Cu(+)(in) + ATP + H2O = Cu(+)(out) + ADP + phosphate + H(+)</text>
        <dbReference type="Rhea" id="RHEA:25792"/>
        <dbReference type="ChEBI" id="CHEBI:15377"/>
        <dbReference type="ChEBI" id="CHEBI:15378"/>
        <dbReference type="ChEBI" id="CHEBI:30616"/>
        <dbReference type="ChEBI" id="CHEBI:43474"/>
        <dbReference type="ChEBI" id="CHEBI:49552"/>
        <dbReference type="ChEBI" id="CHEBI:456216"/>
        <dbReference type="EC" id="7.2.2.8"/>
    </reaction>
</comment>
<comment type="subcellular location">
    <subcellularLocation>
        <location evidence="1">Cell membrane</location>
        <topology evidence="1">Multi-pass membrane protein</topology>
    </subcellularLocation>
</comment>
<comment type="similarity">
    <text evidence="4">Belongs to the cation transport ATPase (P-type) (TC 3.A.3) family. Type IB subfamily.</text>
</comment>
<feature type="chain" id="PRO_0000350586" description="Copper-exporting P-type ATPase">
    <location>
        <begin position="1"/>
        <end position="802"/>
    </location>
</feature>
<feature type="transmembrane region" description="Helical" evidence="2">
    <location>
        <begin position="161"/>
        <end position="181"/>
    </location>
</feature>
<feature type="transmembrane region" description="Helical" evidence="2">
    <location>
        <begin position="192"/>
        <end position="212"/>
    </location>
</feature>
<feature type="transmembrane region" description="Helical" evidence="2">
    <location>
        <begin position="224"/>
        <end position="244"/>
    </location>
</feature>
<feature type="transmembrane region" description="Helical" evidence="2">
    <location>
        <begin position="256"/>
        <end position="276"/>
    </location>
</feature>
<feature type="transmembrane region" description="Helical" evidence="2">
    <location>
        <begin position="411"/>
        <end position="431"/>
    </location>
</feature>
<feature type="transmembrane region" description="Helical" evidence="2">
    <location>
        <begin position="438"/>
        <end position="458"/>
    </location>
</feature>
<feature type="transmembrane region" description="Helical" evidence="2">
    <location>
        <begin position="748"/>
        <end position="767"/>
    </location>
</feature>
<feature type="transmembrane region" description="Helical" evidence="2">
    <location>
        <begin position="771"/>
        <end position="790"/>
    </location>
</feature>
<feature type="domain" description="HMA 1" evidence="3">
    <location>
        <begin position="5"/>
        <end position="70"/>
    </location>
</feature>
<feature type="domain" description="HMA 2" evidence="3">
    <location>
        <begin position="72"/>
        <end position="138"/>
    </location>
</feature>
<feature type="active site" description="4-aspartylphosphate intermediate" evidence="1">
    <location>
        <position position="495"/>
    </location>
</feature>
<feature type="binding site" evidence="3">
    <location>
        <position position="16"/>
    </location>
    <ligand>
        <name>Cu(+)</name>
        <dbReference type="ChEBI" id="CHEBI:49552"/>
        <label>1</label>
    </ligand>
</feature>
<feature type="binding site" evidence="3">
    <location>
        <position position="19"/>
    </location>
    <ligand>
        <name>Cu(+)</name>
        <dbReference type="ChEBI" id="CHEBI:49552"/>
        <label>1</label>
    </ligand>
</feature>
<feature type="binding site" evidence="3">
    <location>
        <position position="83"/>
    </location>
    <ligand>
        <name>Cu(+)</name>
        <dbReference type="ChEBI" id="CHEBI:49552"/>
        <label>2</label>
    </ligand>
</feature>
<feature type="binding site" evidence="3">
    <location>
        <position position="86"/>
    </location>
    <ligand>
        <name>Cu(+)</name>
        <dbReference type="ChEBI" id="CHEBI:49552"/>
        <label>2</label>
    </ligand>
</feature>
<feature type="binding site">
    <location>
        <position position="690"/>
    </location>
    <ligand>
        <name>Mg(2+)</name>
        <dbReference type="ChEBI" id="CHEBI:18420"/>
    </ligand>
</feature>
<feature type="binding site">
    <location>
        <position position="694"/>
    </location>
    <ligand>
        <name>Mg(2+)</name>
        <dbReference type="ChEBI" id="CHEBI:18420"/>
    </ligand>
</feature>